<feature type="chain" id="PRO_0000206862" description="Magnesium-chelatase subunit ChlI">
    <location>
        <begin position="1" status="less than"/>
        <end position="338"/>
    </location>
</feature>
<feature type="binding site" evidence="1">
    <location>
        <begin position="11"/>
        <end position="18"/>
    </location>
    <ligand>
        <name>ATP</name>
        <dbReference type="ChEBI" id="CHEBI:30616"/>
    </ligand>
</feature>
<feature type="non-terminal residue">
    <location>
        <position position="1"/>
    </location>
</feature>
<organism>
    <name type="scientific">Anabaena variabilis</name>
    <dbReference type="NCBI Taxonomy" id="264691"/>
    <lineage>
        <taxon>Bacteria</taxon>
        <taxon>Bacillati</taxon>
        <taxon>Cyanobacteriota</taxon>
        <taxon>Cyanophyceae</taxon>
        <taxon>Nostocales</taxon>
        <taxon>Nostocaceae</taxon>
        <taxon>Trichormus</taxon>
    </lineage>
</organism>
<name>CHLI_ANAVA</name>
<gene>
    <name type="primary">chlI</name>
</gene>
<sequence length="338" mass="37344">DPKIGGVMIMGDRGTGKSTTIRALADLLPEIPVVANDPFNSDPSDPDLMSDEVRQKSGTGAEIPIEFKKVQMVDLPLGATEDRVCGTIDIEKALSEGVKAFEPGLLAKANRGILYVDEVNLLDDHLVDVLLDSAASGWNTVEREGISIRHPARFVLVGSGNPEEGELRPQLLDRFGMHAEIHTVKEPALRVQIVEQRSEFDQNPPTFLEKYNPEQTALQKKIVEAQKLLPEVKLDYDLRVKISEVCSELDVDGLRGDIVTNRAAKALTAYEGRTEVTVDDIRRVITLCLRHRLRKDPLESIDSGYKVEKVFARIFGVELLEDDSSQKNGAGQIKTGVR</sequence>
<reference key="1">
    <citation type="submission" date="1995-03" db="EMBL/GenBank/DDBJ databases">
        <authorList>
            <person name="Sato N."/>
        </authorList>
    </citation>
    <scope>NUCLEOTIDE SEQUENCE [GENOMIC DNA]</scope>
    <source>
        <strain>M3</strain>
    </source>
</reference>
<proteinExistence type="inferred from homology"/>
<comment type="function">
    <text>Involved in chlorophyll biosynthesis; introduces a magnesium ion into protoporphyrin IX to yield Mg-protoporphyrin IX.</text>
</comment>
<comment type="catalytic activity">
    <reaction>
        <text>protoporphyrin IX + Mg(2+) + ATP + H2O = Mg-protoporphyrin IX + ADP + phosphate + 3 H(+)</text>
        <dbReference type="Rhea" id="RHEA:13961"/>
        <dbReference type="ChEBI" id="CHEBI:15377"/>
        <dbReference type="ChEBI" id="CHEBI:15378"/>
        <dbReference type="ChEBI" id="CHEBI:18420"/>
        <dbReference type="ChEBI" id="CHEBI:30616"/>
        <dbReference type="ChEBI" id="CHEBI:43474"/>
        <dbReference type="ChEBI" id="CHEBI:57306"/>
        <dbReference type="ChEBI" id="CHEBI:60492"/>
        <dbReference type="ChEBI" id="CHEBI:456216"/>
        <dbReference type="EC" id="6.6.1.1"/>
    </reaction>
</comment>
<comment type="pathway">
    <text>Porphyrin-containing compound metabolism; chlorophyll biosynthesis.</text>
</comment>
<comment type="similarity">
    <text evidence="2">Belongs to the Mg-chelatase subunits D/I family.</text>
</comment>
<keyword id="KW-0067">ATP-binding</keyword>
<keyword id="KW-0149">Chlorophyll biosynthesis</keyword>
<keyword id="KW-0436">Ligase</keyword>
<keyword id="KW-0547">Nucleotide-binding</keyword>
<keyword id="KW-0602">Photosynthesis</keyword>
<dbReference type="EC" id="6.6.1.1"/>
<dbReference type="EMBL" id="D49426">
    <property type="protein sequence ID" value="BAA08404.1"/>
    <property type="molecule type" value="Genomic_DNA"/>
</dbReference>
<dbReference type="SMR" id="Q44498"/>
<dbReference type="UniPathway" id="UPA00668"/>
<dbReference type="GO" id="GO:0005524">
    <property type="term" value="F:ATP binding"/>
    <property type="evidence" value="ECO:0007669"/>
    <property type="project" value="UniProtKB-KW"/>
</dbReference>
<dbReference type="GO" id="GO:0016887">
    <property type="term" value="F:ATP hydrolysis activity"/>
    <property type="evidence" value="ECO:0007669"/>
    <property type="project" value="InterPro"/>
</dbReference>
<dbReference type="GO" id="GO:0016851">
    <property type="term" value="F:magnesium chelatase activity"/>
    <property type="evidence" value="ECO:0007669"/>
    <property type="project" value="UniProtKB-EC"/>
</dbReference>
<dbReference type="GO" id="GO:0015995">
    <property type="term" value="P:chlorophyll biosynthetic process"/>
    <property type="evidence" value="ECO:0007669"/>
    <property type="project" value="UniProtKB-UniPathway"/>
</dbReference>
<dbReference type="GO" id="GO:0015979">
    <property type="term" value="P:photosynthesis"/>
    <property type="evidence" value="ECO:0007669"/>
    <property type="project" value="UniProtKB-KW"/>
</dbReference>
<dbReference type="FunFam" id="1.10.8.80:FF:000001">
    <property type="entry name" value="Mg-protoporphyrin IX chelatase"/>
    <property type="match status" value="1"/>
</dbReference>
<dbReference type="FunFam" id="3.40.50.300:FF:000601">
    <property type="entry name" value="Mg-protoporphyrin IX chelatase"/>
    <property type="match status" value="1"/>
</dbReference>
<dbReference type="Gene3D" id="1.10.8.80">
    <property type="entry name" value="Magnesium chelatase subunit I, C-Terminal domain"/>
    <property type="match status" value="1"/>
</dbReference>
<dbReference type="Gene3D" id="3.40.50.300">
    <property type="entry name" value="P-loop containing nucleotide triphosphate hydrolases"/>
    <property type="match status" value="1"/>
</dbReference>
<dbReference type="InterPro" id="IPR003593">
    <property type="entry name" value="AAA+_ATPase"/>
</dbReference>
<dbReference type="InterPro" id="IPR045006">
    <property type="entry name" value="CHLI-like"/>
</dbReference>
<dbReference type="InterPro" id="IPR041628">
    <property type="entry name" value="ChlI/MoxR_AAA_lid"/>
</dbReference>
<dbReference type="InterPro" id="IPR011775">
    <property type="entry name" value="Mg_chelatase_ATPase-isu"/>
</dbReference>
<dbReference type="InterPro" id="IPR000523">
    <property type="entry name" value="Mg_chelatse_chII-like_cat_dom"/>
</dbReference>
<dbReference type="InterPro" id="IPR027417">
    <property type="entry name" value="P-loop_NTPase"/>
</dbReference>
<dbReference type="NCBIfam" id="TIGR02030">
    <property type="entry name" value="BchI-ChlI"/>
    <property type="match status" value="1"/>
</dbReference>
<dbReference type="PANTHER" id="PTHR32039">
    <property type="entry name" value="MAGNESIUM-CHELATASE SUBUNIT CHLI"/>
    <property type="match status" value="1"/>
</dbReference>
<dbReference type="PANTHER" id="PTHR32039:SF9">
    <property type="entry name" value="MAGNESIUM-CHELATASE SUBUNIT CHLI-2, CHLOROPLASTIC"/>
    <property type="match status" value="1"/>
</dbReference>
<dbReference type="Pfam" id="PF17863">
    <property type="entry name" value="AAA_lid_2"/>
    <property type="match status" value="1"/>
</dbReference>
<dbReference type="Pfam" id="PF01078">
    <property type="entry name" value="Mg_chelatase"/>
    <property type="match status" value="1"/>
</dbReference>
<dbReference type="SMART" id="SM00382">
    <property type="entry name" value="AAA"/>
    <property type="match status" value="1"/>
</dbReference>
<dbReference type="SUPFAM" id="SSF52540">
    <property type="entry name" value="P-loop containing nucleoside triphosphate hydrolases"/>
    <property type="match status" value="1"/>
</dbReference>
<evidence type="ECO:0000255" key="1"/>
<evidence type="ECO:0000305" key="2"/>
<protein>
    <recommendedName>
        <fullName>Magnesium-chelatase subunit ChlI</fullName>
        <ecNumber>6.6.1.1</ecNumber>
    </recommendedName>
    <alternativeName>
        <fullName>Mg-protoporphyrin IX chelatase</fullName>
    </alternativeName>
</protein>
<accession>Q44498</accession>